<dbReference type="EMBL" id="CP000266">
    <property type="protein sequence ID" value="ABF04441.1"/>
    <property type="molecule type" value="Genomic_DNA"/>
</dbReference>
<dbReference type="RefSeq" id="WP_000523003.1">
    <property type="nucleotide sequence ID" value="NC_008258.1"/>
</dbReference>
<dbReference type="KEGG" id="sfv:SFV_2329"/>
<dbReference type="HOGENOM" id="CLU_131462_1_0_6"/>
<dbReference type="UniPathway" id="UPA00030"/>
<dbReference type="Proteomes" id="UP000000659">
    <property type="component" value="Chromosome"/>
</dbReference>
<dbReference type="GO" id="GO:0005886">
    <property type="term" value="C:plasma membrane"/>
    <property type="evidence" value="ECO:0007669"/>
    <property type="project" value="UniProtKB-SubCell"/>
</dbReference>
<dbReference type="GO" id="GO:1901505">
    <property type="term" value="F:carbohydrate derivative transmembrane transporter activity"/>
    <property type="evidence" value="ECO:0007669"/>
    <property type="project" value="InterPro"/>
</dbReference>
<dbReference type="GO" id="GO:0009245">
    <property type="term" value="P:lipid A biosynthetic process"/>
    <property type="evidence" value="ECO:0007669"/>
    <property type="project" value="UniProtKB-UniRule"/>
</dbReference>
<dbReference type="GO" id="GO:0009103">
    <property type="term" value="P:lipopolysaccharide biosynthetic process"/>
    <property type="evidence" value="ECO:0007669"/>
    <property type="project" value="UniProtKB-UniRule"/>
</dbReference>
<dbReference type="Gene3D" id="1.10.3730.20">
    <property type="match status" value="1"/>
</dbReference>
<dbReference type="HAMAP" id="MF_00538">
    <property type="entry name" value="Flippase_ArnF"/>
    <property type="match status" value="1"/>
</dbReference>
<dbReference type="InterPro" id="IPR022832">
    <property type="entry name" value="Flippase_ArnF"/>
</dbReference>
<dbReference type="InterPro" id="IPR000390">
    <property type="entry name" value="Small_drug/metabolite_transptr"/>
</dbReference>
<dbReference type="NCBIfam" id="NF002816">
    <property type="entry name" value="PRK02971.1-2"/>
    <property type="match status" value="1"/>
</dbReference>
<dbReference type="PANTHER" id="PTHR30561:SF9">
    <property type="entry name" value="4-AMINO-4-DEOXY-L-ARABINOSE-PHOSPHOUNDECAPRENOL FLIPPASE SUBUNIT ARNF-RELATED"/>
    <property type="match status" value="1"/>
</dbReference>
<dbReference type="PANTHER" id="PTHR30561">
    <property type="entry name" value="SMR FAMILY PROTON-DEPENDENT DRUG EFFLUX TRANSPORTER SUGE"/>
    <property type="match status" value="1"/>
</dbReference>
<dbReference type="SUPFAM" id="SSF103481">
    <property type="entry name" value="Multidrug resistance efflux transporter EmrE"/>
    <property type="match status" value="1"/>
</dbReference>
<gene>
    <name evidence="1" type="primary">arnF</name>
    <name type="ordered locus">SFV_2329</name>
</gene>
<organism>
    <name type="scientific">Shigella flexneri serotype 5b (strain 8401)</name>
    <dbReference type="NCBI Taxonomy" id="373384"/>
    <lineage>
        <taxon>Bacteria</taxon>
        <taxon>Pseudomonadati</taxon>
        <taxon>Pseudomonadota</taxon>
        <taxon>Gammaproteobacteria</taxon>
        <taxon>Enterobacterales</taxon>
        <taxon>Enterobacteriaceae</taxon>
        <taxon>Shigella</taxon>
    </lineage>
</organism>
<keyword id="KW-0997">Cell inner membrane</keyword>
<keyword id="KW-1003">Cell membrane</keyword>
<keyword id="KW-0441">Lipid A biosynthesis</keyword>
<keyword id="KW-0444">Lipid biosynthesis</keyword>
<keyword id="KW-0443">Lipid metabolism</keyword>
<keyword id="KW-0448">Lipopolysaccharide biosynthesis</keyword>
<keyword id="KW-0472">Membrane</keyword>
<keyword id="KW-0812">Transmembrane</keyword>
<keyword id="KW-1133">Transmembrane helix</keyword>
<keyword id="KW-0813">Transport</keyword>
<comment type="function">
    <text evidence="1">Translocates 4-amino-4-deoxy-L-arabinose-phosphoundecaprenol (alpha-L-Ara4N-phosphoundecaprenol) from the cytoplasmic to the periplasmic side of the inner membrane.</text>
</comment>
<comment type="pathway">
    <text evidence="1">Bacterial outer membrane biogenesis; lipopolysaccharide biosynthesis.</text>
</comment>
<comment type="subunit">
    <text evidence="1">Heterodimer of ArnE and ArnF.</text>
</comment>
<comment type="subcellular location">
    <subcellularLocation>
        <location evidence="1">Cell inner membrane</location>
        <topology evidence="1">Multi-pass membrane protein</topology>
    </subcellularLocation>
</comment>
<comment type="similarity">
    <text evidence="1">Belongs to the ArnF family.</text>
</comment>
<sequence>MGLIWGLFSVIIASVAQLSLGFAASHLPPMTHLWDFIAALLAFGLDARILLLGLLGYLLSVFCWYKTLHKLALSKAYALLSMSYVLVWIASMVLPGREGTFSLKALLGVACIMSGLMLIFLPTTKQRY</sequence>
<proteinExistence type="inferred from homology"/>
<evidence type="ECO:0000255" key="1">
    <source>
        <dbReference type="HAMAP-Rule" id="MF_00538"/>
    </source>
</evidence>
<reference key="1">
    <citation type="journal article" date="2006" name="BMC Genomics">
        <title>Complete genome sequence of Shigella flexneri 5b and comparison with Shigella flexneri 2a.</title>
        <authorList>
            <person name="Nie H."/>
            <person name="Yang F."/>
            <person name="Zhang X."/>
            <person name="Yang J."/>
            <person name="Chen L."/>
            <person name="Wang J."/>
            <person name="Xiong Z."/>
            <person name="Peng J."/>
            <person name="Sun L."/>
            <person name="Dong J."/>
            <person name="Xue Y."/>
            <person name="Xu X."/>
            <person name="Chen S."/>
            <person name="Yao Z."/>
            <person name="Shen Y."/>
            <person name="Jin Q."/>
        </authorList>
    </citation>
    <scope>NUCLEOTIDE SEQUENCE [LARGE SCALE GENOMIC DNA]</scope>
    <source>
        <strain>8401</strain>
    </source>
</reference>
<protein>
    <recommendedName>
        <fullName evidence="1">Probable 4-amino-4-deoxy-L-arabinose-phosphoundecaprenol flippase subunit ArnF</fullName>
        <shortName evidence="1">L-Ara4N-phosphoundecaprenol flippase subunit ArnF</shortName>
    </recommendedName>
    <alternativeName>
        <fullName evidence="1">Undecaprenyl phosphate-aminoarabinose flippase subunit ArnF</fullName>
    </alternativeName>
</protein>
<name>ARNF_SHIF8</name>
<feature type="chain" id="PRO_1000017387" description="Probable 4-amino-4-deoxy-L-arabinose-phosphoundecaprenol flippase subunit ArnF">
    <location>
        <begin position="1"/>
        <end position="128"/>
    </location>
</feature>
<feature type="topological domain" description="Cytoplasmic" evidence="1">
    <location>
        <begin position="1"/>
        <end position="2"/>
    </location>
</feature>
<feature type="transmembrane region" description="Helical" evidence="1">
    <location>
        <begin position="3"/>
        <end position="23"/>
    </location>
</feature>
<feature type="topological domain" description="Periplasmic" evidence="1">
    <location>
        <begin position="24"/>
        <end position="35"/>
    </location>
</feature>
<feature type="transmembrane region" description="Helical" evidence="1">
    <location>
        <begin position="36"/>
        <end position="56"/>
    </location>
</feature>
<feature type="topological domain" description="Cytoplasmic" evidence="1">
    <location>
        <begin position="57"/>
        <end position="75"/>
    </location>
</feature>
<feature type="transmembrane region" description="Helical" evidence="1">
    <location>
        <begin position="76"/>
        <end position="96"/>
    </location>
</feature>
<feature type="topological domain" description="Periplasmic" evidence="1">
    <location>
        <begin position="97"/>
        <end position="100"/>
    </location>
</feature>
<feature type="transmembrane region" description="Helical" evidence="1">
    <location>
        <begin position="101"/>
        <end position="121"/>
    </location>
</feature>
<feature type="topological domain" description="Cytoplasmic" evidence="1">
    <location>
        <begin position="122"/>
        <end position="128"/>
    </location>
</feature>
<accession>Q0T2M4</accession>